<proteinExistence type="inferred from homology"/>
<feature type="chain" id="PRO_1000018334" description="Tryptophan synthase beta chain">
    <location>
        <begin position="1"/>
        <end position="417"/>
    </location>
</feature>
<feature type="modified residue" description="N6-(pyridoxal phosphate)lysine" evidence="1">
    <location>
        <position position="99"/>
    </location>
</feature>
<evidence type="ECO:0000255" key="1">
    <source>
        <dbReference type="HAMAP-Rule" id="MF_00133"/>
    </source>
</evidence>
<gene>
    <name evidence="1" type="primary">trpB</name>
    <name type="ordered locus">cgR_2920</name>
</gene>
<name>TRPB_CORGB</name>
<dbReference type="EC" id="4.2.1.20" evidence="1"/>
<dbReference type="EMBL" id="AP009044">
    <property type="protein sequence ID" value="BAF55942.1"/>
    <property type="molecule type" value="Genomic_DNA"/>
</dbReference>
<dbReference type="RefSeq" id="WP_011898116.1">
    <property type="nucleotide sequence ID" value="NC_009342.1"/>
</dbReference>
<dbReference type="SMR" id="A4QI76"/>
<dbReference type="KEGG" id="cgt:cgR_2920"/>
<dbReference type="HOGENOM" id="CLU_016734_3_1_11"/>
<dbReference type="PhylomeDB" id="A4QI76"/>
<dbReference type="UniPathway" id="UPA00035">
    <property type="reaction ID" value="UER00044"/>
</dbReference>
<dbReference type="Proteomes" id="UP000006698">
    <property type="component" value="Chromosome"/>
</dbReference>
<dbReference type="GO" id="GO:0005737">
    <property type="term" value="C:cytoplasm"/>
    <property type="evidence" value="ECO:0007669"/>
    <property type="project" value="TreeGrafter"/>
</dbReference>
<dbReference type="GO" id="GO:0004834">
    <property type="term" value="F:tryptophan synthase activity"/>
    <property type="evidence" value="ECO:0007669"/>
    <property type="project" value="UniProtKB-UniRule"/>
</dbReference>
<dbReference type="CDD" id="cd06446">
    <property type="entry name" value="Trp-synth_B"/>
    <property type="match status" value="1"/>
</dbReference>
<dbReference type="FunFam" id="3.40.50.1100:FF:000001">
    <property type="entry name" value="Tryptophan synthase beta chain"/>
    <property type="match status" value="1"/>
</dbReference>
<dbReference type="FunFam" id="3.40.50.1100:FF:000004">
    <property type="entry name" value="Tryptophan synthase beta chain"/>
    <property type="match status" value="1"/>
</dbReference>
<dbReference type="Gene3D" id="3.40.50.1100">
    <property type="match status" value="2"/>
</dbReference>
<dbReference type="HAMAP" id="MF_00133">
    <property type="entry name" value="Trp_synth_beta"/>
    <property type="match status" value="1"/>
</dbReference>
<dbReference type="InterPro" id="IPR006653">
    <property type="entry name" value="Trp_synth_b_CS"/>
</dbReference>
<dbReference type="InterPro" id="IPR006654">
    <property type="entry name" value="Trp_synth_beta"/>
</dbReference>
<dbReference type="InterPro" id="IPR023026">
    <property type="entry name" value="Trp_synth_beta/beta-like"/>
</dbReference>
<dbReference type="InterPro" id="IPR001926">
    <property type="entry name" value="TrpB-like_PALP"/>
</dbReference>
<dbReference type="InterPro" id="IPR036052">
    <property type="entry name" value="TrpB-like_PALP_sf"/>
</dbReference>
<dbReference type="NCBIfam" id="TIGR00263">
    <property type="entry name" value="trpB"/>
    <property type="match status" value="1"/>
</dbReference>
<dbReference type="PANTHER" id="PTHR48077:SF3">
    <property type="entry name" value="TRYPTOPHAN SYNTHASE"/>
    <property type="match status" value="1"/>
</dbReference>
<dbReference type="PANTHER" id="PTHR48077">
    <property type="entry name" value="TRYPTOPHAN SYNTHASE-RELATED"/>
    <property type="match status" value="1"/>
</dbReference>
<dbReference type="Pfam" id="PF00291">
    <property type="entry name" value="PALP"/>
    <property type="match status" value="1"/>
</dbReference>
<dbReference type="PIRSF" id="PIRSF001413">
    <property type="entry name" value="Trp_syn_beta"/>
    <property type="match status" value="1"/>
</dbReference>
<dbReference type="SUPFAM" id="SSF53686">
    <property type="entry name" value="Tryptophan synthase beta subunit-like PLP-dependent enzymes"/>
    <property type="match status" value="1"/>
</dbReference>
<dbReference type="PROSITE" id="PS00168">
    <property type="entry name" value="TRP_SYNTHASE_BETA"/>
    <property type="match status" value="1"/>
</dbReference>
<accession>A4QI76</accession>
<organism>
    <name type="scientific">Corynebacterium glutamicum (strain R)</name>
    <dbReference type="NCBI Taxonomy" id="340322"/>
    <lineage>
        <taxon>Bacteria</taxon>
        <taxon>Bacillati</taxon>
        <taxon>Actinomycetota</taxon>
        <taxon>Actinomycetes</taxon>
        <taxon>Mycobacteriales</taxon>
        <taxon>Corynebacteriaceae</taxon>
        <taxon>Corynebacterium</taxon>
    </lineage>
</organism>
<protein>
    <recommendedName>
        <fullName evidence="1">Tryptophan synthase beta chain</fullName>
        <ecNumber evidence="1">4.2.1.20</ecNumber>
    </recommendedName>
</protein>
<keyword id="KW-0028">Amino-acid biosynthesis</keyword>
<keyword id="KW-0057">Aromatic amino acid biosynthesis</keyword>
<keyword id="KW-0456">Lyase</keyword>
<keyword id="KW-0663">Pyridoxal phosphate</keyword>
<keyword id="KW-0822">Tryptophan biosynthesis</keyword>
<sequence length="417" mass="44813">MTEKENLGGSTLLPAYFGEFGGQFVAESLLPALDQLEKAFVDATNSPEFREELGGYLRDYLGRPTPLTECSNLPLSGEGKGFARIFLKREDLVHGGAHKTNQVIGQVLLAKRMGKTRIIAETGAGQHGTATALACALMGLECVVYMGAKDVARQQPNVYRMQLHGAKVIPVESGSGTLKDAVNEALRDWTATFHESHYLLGTAAGPHPFPTIVREFHKVISEEAKAQMLERTGKLPDVVVACVGGGSNAIGMFADFIDDEGVELVGAEPAGEGLDSGKHGATITNGQIGILHGTRSYLMRNSDGQVEESYSISAGLDYPGVGPQHAHLHATGRATYVGITDAEALQAFQYLARYEGIIPALESSHAFAYALKRAKTAEEEGQNLTILVSLSGRGDKDVDHVRRTLEENPELILKDNR</sequence>
<comment type="function">
    <text evidence="1">The beta subunit is responsible for the synthesis of L-tryptophan from indole and L-serine.</text>
</comment>
<comment type="catalytic activity">
    <reaction evidence="1">
        <text>(1S,2R)-1-C-(indol-3-yl)glycerol 3-phosphate + L-serine = D-glyceraldehyde 3-phosphate + L-tryptophan + H2O</text>
        <dbReference type="Rhea" id="RHEA:10532"/>
        <dbReference type="ChEBI" id="CHEBI:15377"/>
        <dbReference type="ChEBI" id="CHEBI:33384"/>
        <dbReference type="ChEBI" id="CHEBI:57912"/>
        <dbReference type="ChEBI" id="CHEBI:58866"/>
        <dbReference type="ChEBI" id="CHEBI:59776"/>
        <dbReference type="EC" id="4.2.1.20"/>
    </reaction>
</comment>
<comment type="cofactor">
    <cofactor evidence="1">
        <name>pyridoxal 5'-phosphate</name>
        <dbReference type="ChEBI" id="CHEBI:597326"/>
    </cofactor>
</comment>
<comment type="pathway">
    <text evidence="1">Amino-acid biosynthesis; L-tryptophan biosynthesis; L-tryptophan from chorismate: step 5/5.</text>
</comment>
<comment type="subunit">
    <text evidence="1">Tetramer of two alpha and two beta chains.</text>
</comment>
<comment type="similarity">
    <text evidence="1">Belongs to the TrpB family.</text>
</comment>
<reference key="1">
    <citation type="journal article" date="2007" name="Microbiology">
        <title>Comparative analysis of the Corynebacterium glutamicum group and complete genome sequence of strain R.</title>
        <authorList>
            <person name="Yukawa H."/>
            <person name="Omumasaba C.A."/>
            <person name="Nonaka H."/>
            <person name="Kos P."/>
            <person name="Okai N."/>
            <person name="Suzuki N."/>
            <person name="Suda M."/>
            <person name="Tsuge Y."/>
            <person name="Watanabe J."/>
            <person name="Ikeda Y."/>
            <person name="Vertes A.A."/>
            <person name="Inui M."/>
        </authorList>
    </citation>
    <scope>NUCLEOTIDE SEQUENCE [LARGE SCALE GENOMIC DNA]</scope>
    <source>
        <strain>R</strain>
    </source>
</reference>